<feature type="signal peptide" evidence="4">
    <location>
        <begin position="1"/>
        <end position="22"/>
    </location>
</feature>
<feature type="chain" id="PRO_0000278126" description="Zinc transporter ZIP4" evidence="4">
    <location>
        <begin position="23"/>
        <end position="657"/>
    </location>
</feature>
<feature type="topological domain" description="Extracellular" evidence="4">
    <location>
        <begin position="23"/>
        <end position="335"/>
    </location>
</feature>
<feature type="transmembrane region" description="Helical; Name=1" evidence="1">
    <location>
        <begin position="336"/>
        <end position="356"/>
    </location>
</feature>
<feature type="topological domain" description="Cytoplasmic" evidence="4">
    <location>
        <begin position="357"/>
        <end position="374"/>
    </location>
</feature>
<feature type="transmembrane region" description="Helical; Name=2" evidence="1">
    <location>
        <begin position="375"/>
        <end position="395"/>
    </location>
</feature>
<feature type="topological domain" description="Extracellular" evidence="4">
    <location>
        <begin position="396"/>
        <end position="417"/>
    </location>
</feature>
<feature type="transmembrane region" description="Helical; Name=3" evidence="1">
    <location>
        <begin position="418"/>
        <end position="438"/>
    </location>
</feature>
<feature type="topological domain" description="Cytoplasmic" evidence="4">
    <location>
        <begin position="439"/>
        <end position="508"/>
    </location>
</feature>
<feature type="transmembrane region" description="Helical; Name=4" evidence="1">
    <location>
        <begin position="509"/>
        <end position="528"/>
    </location>
</feature>
<feature type="topological domain" description="Extracellular" evidence="4">
    <location>
        <begin position="529"/>
        <end position="536"/>
    </location>
</feature>
<feature type="transmembrane region" description="Helical; Name=5" evidence="1">
    <location>
        <begin position="537"/>
        <end position="563"/>
    </location>
</feature>
<feature type="topological domain" description="Cytoplasmic" evidence="4">
    <location>
        <begin position="564"/>
        <end position="568"/>
    </location>
</feature>
<feature type="transmembrane region" description="Helical; Name=6" evidence="1">
    <location>
        <begin position="569"/>
        <end position="589"/>
    </location>
</feature>
<feature type="topological domain" description="Extracellular" evidence="4">
    <location>
        <begin position="590"/>
        <end position="597"/>
    </location>
</feature>
<feature type="transmembrane region" description="Helical; Name=7" evidence="1">
    <location>
        <begin position="598"/>
        <end position="618"/>
    </location>
</feature>
<feature type="topological domain" description="Cytoplasmic" evidence="4">
    <location>
        <begin position="619"/>
        <end position="627"/>
    </location>
</feature>
<feature type="transmembrane region" description="Helical; Name=8" evidence="1">
    <location>
        <begin position="628"/>
        <end position="648"/>
    </location>
</feature>
<feature type="topological domain" description="Extracellular" evidence="4">
    <location>
        <begin position="649"/>
        <end position="657"/>
    </location>
</feature>
<feature type="region of interest" description="Disordered" evidence="5">
    <location>
        <begin position="467"/>
        <end position="491"/>
    </location>
</feature>
<feature type="short sequence motif" description="Essential for SLC39A4 endocytosis" evidence="2">
    <location>
        <begin position="462"/>
        <end position="464"/>
    </location>
</feature>
<feature type="binding site" description="M1 metal binding site" evidence="1">
    <location>
        <position position="517"/>
    </location>
    <ligand>
        <name>Zn(2+)</name>
        <dbReference type="ChEBI" id="CHEBI:29105"/>
        <label>1</label>
    </ligand>
</feature>
<feature type="binding site" description="M2 metal binding site" evidence="1">
    <location>
        <position position="518"/>
    </location>
    <ligand>
        <name>Zn(2+)</name>
        <dbReference type="ChEBI" id="CHEBI:29105"/>
        <label>2</label>
    </ligand>
</feature>
<feature type="binding site" description="M1 metal binding site" evidence="1">
    <location>
        <position position="521"/>
    </location>
    <ligand>
        <name>Zn(2+)</name>
        <dbReference type="ChEBI" id="CHEBI:29105"/>
        <label>1</label>
    </ligand>
</feature>
<feature type="binding site" description="M2 metal binding site" evidence="1">
    <location>
        <position position="521"/>
    </location>
    <ligand>
        <name>Zn(2+)</name>
        <dbReference type="ChEBI" id="CHEBI:29105"/>
        <label>2</label>
    </ligand>
</feature>
<feature type="binding site" description="M1 metal binding site" evidence="1">
    <location>
        <position position="546"/>
    </location>
    <ligand>
        <name>Zn(2+)</name>
        <dbReference type="ChEBI" id="CHEBI:29105"/>
        <label>1</label>
    </ligand>
</feature>
<feature type="binding site" description="M2 metal binding site" evidence="1">
    <location>
        <position position="547"/>
    </location>
    <ligand>
        <name>Zn(2+)</name>
        <dbReference type="ChEBI" id="CHEBI:29105"/>
        <label>2</label>
    </ligand>
</feature>
<feature type="binding site" description="M1 metal binding site" evidence="1">
    <location>
        <position position="550"/>
    </location>
    <ligand>
        <name>Zn(2+)</name>
        <dbReference type="ChEBI" id="CHEBI:29105"/>
        <label>1</label>
    </ligand>
</feature>
<feature type="site" description="Essential role in Zn(2+) sensing" evidence="2">
    <location>
        <position position="521"/>
    </location>
</feature>
<feature type="glycosylation site" description="N-linked (GlcNAc...) asparagine" evidence="4">
    <location>
        <position position="193"/>
    </location>
</feature>
<feature type="glycosylation site" description="N-linked (GlcNAc...) asparagine" evidence="4">
    <location>
        <position position="220"/>
    </location>
</feature>
<feature type="glycosylation site" description="N-linked (GlcNAc...) asparagine" evidence="2">
    <location>
        <position position="268"/>
    </location>
</feature>
<sequence>MMLPKSLTQGLLLAMLVGTAAMVQPYHLLSLLTSGQGALDRTALDGLLNTLVARVHCTDGPCEKCLSVETALALGKPDKPQLAPESVLESRYITYLSAAAALYLNDPEKTCKDIRAGLLASHVDDYLAKLESPEAMTLGLSQLLQKIEAHDASQPTREETCVDVPQLLEEAEEAGVSRSPGLVLTALLDHVLNGSCFQGLPSPQYFVDFVFRQLSSKPRNITLPELEDLMHHLGVGGEDHSDHGDHVDHSHLDREANHQDSELHATHNSSSSVWDTLCLSAKDVMAVYGLSEEAGVSPQAWAQLTPALVQQQLSEACSSSPIIHVQDQLSQAERYLYGSLATLLICLCAVFGLLLLTCAKCSTATHYIMQTFLSLAVGALTGDALLHLIPKVLGLHTHSGEVHSHEEESIGGQSTWRLLAVLGGFYIFFLFESFFNLLLPRDQDHEKDGPCSHGGHSHGISLQLSPSNLRQSKQPHESSRSDLVTEETPELLNPDTRRLRAELRMLPYLITLGDAVHNFADGLAVGAAFSSTWKTGLATSLAVFCHELPHELGDFAALLHAGLTVKRALLLNLASALTAFAGLYVALAVGVGEEGETWILAVATGLFLYVALCDMLPAMMNVRDQRPWLLFLLHNVGLLGGWTILLLLSLYEDSITF</sequence>
<dbReference type="EMBL" id="AC139605">
    <property type="status" value="NOT_ANNOTATED_CDS"/>
    <property type="molecule type" value="Genomic_DNA"/>
</dbReference>
<dbReference type="EMBL" id="BC127514">
    <property type="protein sequence ID" value="AAI27515.1"/>
    <property type="status" value="ALT_INIT"/>
    <property type="molecule type" value="mRNA"/>
</dbReference>
<dbReference type="RefSeq" id="NP_001071137.2">
    <property type="nucleotide sequence ID" value="NM_001077669.2"/>
</dbReference>
<dbReference type="RefSeq" id="XP_008763785.1">
    <property type="nucleotide sequence ID" value="XM_008765563.2"/>
</dbReference>
<dbReference type="RefSeq" id="XP_008763786.1">
    <property type="nucleotide sequence ID" value="XM_008765564.2"/>
</dbReference>
<dbReference type="SMR" id="A0JPN2"/>
<dbReference type="FunCoup" id="A0JPN2">
    <property type="interactions" value="63"/>
</dbReference>
<dbReference type="STRING" id="10116.ENSRNOP00000047376"/>
<dbReference type="GlyCosmos" id="A0JPN2">
    <property type="glycosylation" value="3 sites, No reported glycans"/>
</dbReference>
<dbReference type="GlyGen" id="A0JPN2">
    <property type="glycosylation" value="3 sites"/>
</dbReference>
<dbReference type="PhosphoSitePlus" id="A0JPN2"/>
<dbReference type="PaxDb" id="10116-ENSRNOP00000047376"/>
<dbReference type="PeptideAtlas" id="A0JPN2"/>
<dbReference type="Ensembl" id="ENSRNOT00000040422.6">
    <property type="protein sequence ID" value="ENSRNOP00000047376.4"/>
    <property type="gene ID" value="ENSRNOG00000014314.9"/>
</dbReference>
<dbReference type="Ensembl" id="ENSRNOT00055044997">
    <property type="protein sequence ID" value="ENSRNOP00055036896"/>
    <property type="gene ID" value="ENSRNOG00055026065"/>
</dbReference>
<dbReference type="Ensembl" id="ENSRNOT00060046392">
    <property type="protein sequence ID" value="ENSRNOP00060038553"/>
    <property type="gene ID" value="ENSRNOG00060026757"/>
</dbReference>
<dbReference type="Ensembl" id="ENSRNOT00065049604">
    <property type="protein sequence ID" value="ENSRNOP00065040726"/>
    <property type="gene ID" value="ENSRNOG00065028737"/>
</dbReference>
<dbReference type="GeneID" id="300051"/>
<dbReference type="KEGG" id="rno:300051"/>
<dbReference type="UCSC" id="RGD:1306701">
    <property type="organism name" value="rat"/>
</dbReference>
<dbReference type="AGR" id="RGD:1306701"/>
<dbReference type="CTD" id="55630"/>
<dbReference type="RGD" id="1306701">
    <property type="gene designation" value="Slc39a4"/>
</dbReference>
<dbReference type="eggNOG" id="KOG2693">
    <property type="taxonomic scope" value="Eukaryota"/>
</dbReference>
<dbReference type="GeneTree" id="ENSGT00940000160042"/>
<dbReference type="HOGENOM" id="CLU_015114_12_1_1"/>
<dbReference type="InParanoid" id="A0JPN2"/>
<dbReference type="OMA" id="PPKQPHE"/>
<dbReference type="OrthoDB" id="200954at2759"/>
<dbReference type="PhylomeDB" id="A0JPN2"/>
<dbReference type="TreeFam" id="TF318470"/>
<dbReference type="Reactome" id="R-RNO-442380">
    <property type="pathway name" value="Zinc influx into cells by the SLC39 gene family"/>
</dbReference>
<dbReference type="PRO" id="PR:A0JPN2"/>
<dbReference type="Proteomes" id="UP000002494">
    <property type="component" value="Chromosome 7"/>
</dbReference>
<dbReference type="GO" id="GO:0016324">
    <property type="term" value="C:apical plasma membrane"/>
    <property type="evidence" value="ECO:0000250"/>
    <property type="project" value="UniProtKB"/>
</dbReference>
<dbReference type="GO" id="GO:0031410">
    <property type="term" value="C:cytoplasmic vesicle"/>
    <property type="evidence" value="ECO:0000250"/>
    <property type="project" value="UniProtKB"/>
</dbReference>
<dbReference type="GO" id="GO:0005886">
    <property type="term" value="C:plasma membrane"/>
    <property type="evidence" value="ECO:0000250"/>
    <property type="project" value="UniProtKB"/>
</dbReference>
<dbReference type="GO" id="GO:0055038">
    <property type="term" value="C:recycling endosome membrane"/>
    <property type="evidence" value="ECO:0000250"/>
    <property type="project" value="UniProtKB"/>
</dbReference>
<dbReference type="GO" id="GO:0042802">
    <property type="term" value="F:identical protein binding"/>
    <property type="evidence" value="ECO:0000250"/>
    <property type="project" value="UniProtKB"/>
</dbReference>
<dbReference type="GO" id="GO:0046872">
    <property type="term" value="F:metal ion binding"/>
    <property type="evidence" value="ECO:0000266"/>
    <property type="project" value="RGD"/>
</dbReference>
<dbReference type="GO" id="GO:0140410">
    <property type="term" value="F:monoatomic cation:bicarbonate symporter activity"/>
    <property type="evidence" value="ECO:0000318"/>
    <property type="project" value="GO_Central"/>
</dbReference>
<dbReference type="GO" id="GO:0008270">
    <property type="term" value="F:zinc ion binding"/>
    <property type="evidence" value="ECO:0000266"/>
    <property type="project" value="RGD"/>
</dbReference>
<dbReference type="GO" id="GO:0106219">
    <property type="term" value="F:zinc ion sensor activity"/>
    <property type="evidence" value="ECO:0000250"/>
    <property type="project" value="UniProtKB"/>
</dbReference>
<dbReference type="GO" id="GO:0140486">
    <property type="term" value="F:zinc ion sequestering activity"/>
    <property type="evidence" value="ECO:0000266"/>
    <property type="project" value="RGD"/>
</dbReference>
<dbReference type="GO" id="GO:0005385">
    <property type="term" value="F:zinc ion transmembrane transporter activity"/>
    <property type="evidence" value="ECO:0000250"/>
    <property type="project" value="UniProtKB"/>
</dbReference>
<dbReference type="GO" id="GO:0034224">
    <property type="term" value="P:cellular response to zinc ion starvation"/>
    <property type="evidence" value="ECO:0000266"/>
    <property type="project" value="RGD"/>
</dbReference>
<dbReference type="GO" id="GO:0030003">
    <property type="term" value="P:intracellular monoatomic cation homeostasis"/>
    <property type="evidence" value="ECO:0000318"/>
    <property type="project" value="GO_Central"/>
</dbReference>
<dbReference type="GO" id="GO:0006882">
    <property type="term" value="P:intracellular zinc ion homeostasis"/>
    <property type="evidence" value="ECO:0000250"/>
    <property type="project" value="UniProtKB"/>
</dbReference>
<dbReference type="GO" id="GO:0071578">
    <property type="term" value="P:zinc ion import across plasma membrane"/>
    <property type="evidence" value="ECO:0000318"/>
    <property type="project" value="GO_Central"/>
</dbReference>
<dbReference type="GO" id="GO:0071577">
    <property type="term" value="P:zinc ion transmembrane transport"/>
    <property type="evidence" value="ECO:0000250"/>
    <property type="project" value="UniProtKB"/>
</dbReference>
<dbReference type="InterPro" id="IPR003689">
    <property type="entry name" value="ZIP"/>
</dbReference>
<dbReference type="InterPro" id="IPR049406">
    <property type="entry name" value="ZIP4_12_EF-hand"/>
</dbReference>
<dbReference type="InterPro" id="IPR041137">
    <property type="entry name" value="ZIP4_N"/>
</dbReference>
<dbReference type="InterPro" id="IPR050799">
    <property type="entry name" value="ZIP_Transporter"/>
</dbReference>
<dbReference type="PANTHER" id="PTHR12191">
    <property type="entry name" value="SOLUTE CARRIER FAMILY 39"/>
    <property type="match status" value="1"/>
</dbReference>
<dbReference type="PANTHER" id="PTHR12191:SF21">
    <property type="entry name" value="ZINC TRANSPORTER ZIP4"/>
    <property type="match status" value="1"/>
</dbReference>
<dbReference type="Pfam" id="PF21116">
    <property type="entry name" value="EF-hand_Zip"/>
    <property type="match status" value="1"/>
</dbReference>
<dbReference type="Pfam" id="PF02535">
    <property type="entry name" value="Zip"/>
    <property type="match status" value="1"/>
</dbReference>
<dbReference type="Pfam" id="PF18292">
    <property type="entry name" value="ZIP4_domain"/>
    <property type="match status" value="1"/>
</dbReference>
<accession>A0JPN2</accession>
<proteinExistence type="evidence at transcript level"/>
<gene>
    <name type="primary">Slc39a4</name>
    <name evidence="7" type="synonym">Zip4</name>
</gene>
<protein>
    <recommendedName>
        <fullName>Zinc transporter ZIP4</fullName>
    </recommendedName>
    <alternativeName>
        <fullName>Solute carrier family 39 member 4</fullName>
    </alternativeName>
    <alternativeName>
        <fullName>Zrt- and Irt-like protein 4</fullName>
        <shortName>ZIP-4</shortName>
    </alternativeName>
</protein>
<reference key="1">
    <citation type="journal article" date="2004" name="Nature">
        <title>Genome sequence of the Brown Norway rat yields insights into mammalian evolution.</title>
        <authorList>
            <person name="Gibbs R.A."/>
            <person name="Weinstock G.M."/>
            <person name="Metzker M.L."/>
            <person name="Muzny D.M."/>
            <person name="Sodergren E.J."/>
            <person name="Scherer S."/>
            <person name="Scott G."/>
            <person name="Steffen D."/>
            <person name="Worley K.C."/>
            <person name="Burch P.E."/>
            <person name="Okwuonu G."/>
            <person name="Hines S."/>
            <person name="Lewis L."/>
            <person name="Deramo C."/>
            <person name="Delgado O."/>
            <person name="Dugan-Rocha S."/>
            <person name="Miner G."/>
            <person name="Morgan M."/>
            <person name="Hawes A."/>
            <person name="Gill R."/>
            <person name="Holt R.A."/>
            <person name="Adams M.D."/>
            <person name="Amanatides P.G."/>
            <person name="Baden-Tillson H."/>
            <person name="Barnstead M."/>
            <person name="Chin S."/>
            <person name="Evans C.A."/>
            <person name="Ferriera S."/>
            <person name="Fosler C."/>
            <person name="Glodek A."/>
            <person name="Gu Z."/>
            <person name="Jennings D."/>
            <person name="Kraft C.L."/>
            <person name="Nguyen T."/>
            <person name="Pfannkoch C.M."/>
            <person name="Sitter C."/>
            <person name="Sutton G.G."/>
            <person name="Venter J.C."/>
            <person name="Woodage T."/>
            <person name="Smith D."/>
            <person name="Lee H.-M."/>
            <person name="Gustafson E."/>
            <person name="Cahill P."/>
            <person name="Kana A."/>
            <person name="Doucette-Stamm L."/>
            <person name="Weinstock K."/>
            <person name="Fechtel K."/>
            <person name="Weiss R.B."/>
            <person name="Dunn D.M."/>
            <person name="Green E.D."/>
            <person name="Blakesley R.W."/>
            <person name="Bouffard G.G."/>
            <person name="De Jong P.J."/>
            <person name="Osoegawa K."/>
            <person name="Zhu B."/>
            <person name="Marra M."/>
            <person name="Schein J."/>
            <person name="Bosdet I."/>
            <person name="Fjell C."/>
            <person name="Jones S."/>
            <person name="Krzywinski M."/>
            <person name="Mathewson C."/>
            <person name="Siddiqui A."/>
            <person name="Wye N."/>
            <person name="McPherson J."/>
            <person name="Zhao S."/>
            <person name="Fraser C.M."/>
            <person name="Shetty J."/>
            <person name="Shatsman S."/>
            <person name="Geer K."/>
            <person name="Chen Y."/>
            <person name="Abramzon S."/>
            <person name="Nierman W.C."/>
            <person name="Havlak P.H."/>
            <person name="Chen R."/>
            <person name="Durbin K.J."/>
            <person name="Egan A."/>
            <person name="Ren Y."/>
            <person name="Song X.-Z."/>
            <person name="Li B."/>
            <person name="Liu Y."/>
            <person name="Qin X."/>
            <person name="Cawley S."/>
            <person name="Cooney A.J."/>
            <person name="D'Souza L.M."/>
            <person name="Martin K."/>
            <person name="Wu J.Q."/>
            <person name="Gonzalez-Garay M.L."/>
            <person name="Jackson A.R."/>
            <person name="Kalafus K.J."/>
            <person name="McLeod M.P."/>
            <person name="Milosavljevic A."/>
            <person name="Virk D."/>
            <person name="Volkov A."/>
            <person name="Wheeler D.A."/>
            <person name="Zhang Z."/>
            <person name="Bailey J.A."/>
            <person name="Eichler E.E."/>
            <person name="Tuzun E."/>
            <person name="Birney E."/>
            <person name="Mongin E."/>
            <person name="Ureta-Vidal A."/>
            <person name="Woodwark C."/>
            <person name="Zdobnov E."/>
            <person name="Bork P."/>
            <person name="Suyama M."/>
            <person name="Torrents D."/>
            <person name="Alexandersson M."/>
            <person name="Trask B.J."/>
            <person name="Young J.M."/>
            <person name="Huang H."/>
            <person name="Wang H."/>
            <person name="Xing H."/>
            <person name="Daniels S."/>
            <person name="Gietzen D."/>
            <person name="Schmidt J."/>
            <person name="Stevens K."/>
            <person name="Vitt U."/>
            <person name="Wingrove J."/>
            <person name="Camara F."/>
            <person name="Mar Alba M."/>
            <person name="Abril J.F."/>
            <person name="Guigo R."/>
            <person name="Smit A."/>
            <person name="Dubchak I."/>
            <person name="Rubin E.M."/>
            <person name="Couronne O."/>
            <person name="Poliakov A."/>
            <person name="Huebner N."/>
            <person name="Ganten D."/>
            <person name="Goesele C."/>
            <person name="Hummel O."/>
            <person name="Kreitler T."/>
            <person name="Lee Y.-A."/>
            <person name="Monti J."/>
            <person name="Schulz H."/>
            <person name="Zimdahl H."/>
            <person name="Himmelbauer H."/>
            <person name="Lehrach H."/>
            <person name="Jacob H.J."/>
            <person name="Bromberg S."/>
            <person name="Gullings-Handley J."/>
            <person name="Jensen-Seaman M.I."/>
            <person name="Kwitek A.E."/>
            <person name="Lazar J."/>
            <person name="Pasko D."/>
            <person name="Tonellato P.J."/>
            <person name="Twigger S."/>
            <person name="Ponting C.P."/>
            <person name="Duarte J.M."/>
            <person name="Rice S."/>
            <person name="Goodstadt L."/>
            <person name="Beatson S.A."/>
            <person name="Emes R.D."/>
            <person name="Winter E.E."/>
            <person name="Webber C."/>
            <person name="Brandt P."/>
            <person name="Nyakatura G."/>
            <person name="Adetobi M."/>
            <person name="Chiaromonte F."/>
            <person name="Elnitski L."/>
            <person name="Eswara P."/>
            <person name="Hardison R.C."/>
            <person name="Hou M."/>
            <person name="Kolbe D."/>
            <person name="Makova K."/>
            <person name="Miller W."/>
            <person name="Nekrutenko A."/>
            <person name="Riemer C."/>
            <person name="Schwartz S."/>
            <person name="Taylor J."/>
            <person name="Yang S."/>
            <person name="Zhang Y."/>
            <person name="Lindpaintner K."/>
            <person name="Andrews T.D."/>
            <person name="Caccamo M."/>
            <person name="Clamp M."/>
            <person name="Clarke L."/>
            <person name="Curwen V."/>
            <person name="Durbin R.M."/>
            <person name="Eyras E."/>
            <person name="Searle S.M."/>
            <person name="Cooper G.M."/>
            <person name="Batzoglou S."/>
            <person name="Brudno M."/>
            <person name="Sidow A."/>
            <person name="Stone E.A."/>
            <person name="Payseur B.A."/>
            <person name="Bourque G."/>
            <person name="Lopez-Otin C."/>
            <person name="Puente X.S."/>
            <person name="Chakrabarti K."/>
            <person name="Chatterji S."/>
            <person name="Dewey C."/>
            <person name="Pachter L."/>
            <person name="Bray N."/>
            <person name="Yap V.B."/>
            <person name="Caspi A."/>
            <person name="Tesler G."/>
            <person name="Pevzner P.A."/>
            <person name="Haussler D."/>
            <person name="Roskin K.M."/>
            <person name="Baertsch R."/>
            <person name="Clawson H."/>
            <person name="Furey T.S."/>
            <person name="Hinrichs A.S."/>
            <person name="Karolchik D."/>
            <person name="Kent W.J."/>
            <person name="Rosenbloom K.R."/>
            <person name="Trumbower H."/>
            <person name="Weirauch M."/>
            <person name="Cooper D.N."/>
            <person name="Stenson P.D."/>
            <person name="Ma B."/>
            <person name="Brent M."/>
            <person name="Arumugam M."/>
            <person name="Shteynberg D."/>
            <person name="Copley R.R."/>
            <person name="Taylor M.S."/>
            <person name="Riethman H."/>
            <person name="Mudunuri U."/>
            <person name="Peterson J."/>
            <person name="Guyer M."/>
            <person name="Felsenfeld A."/>
            <person name="Old S."/>
            <person name="Mockrin S."/>
            <person name="Collins F.S."/>
        </authorList>
    </citation>
    <scope>NUCLEOTIDE SEQUENCE [LARGE SCALE GENOMIC DNA]</scope>
    <source>
        <strain>Brown Norway</strain>
    </source>
</reference>
<reference evidence="9" key="2">
    <citation type="journal article" date="2004" name="Genome Res.">
        <title>The status, quality, and expansion of the NIH full-length cDNA project: the Mammalian Gene Collection (MGC).</title>
        <authorList>
            <consortium name="The MGC Project Team"/>
        </authorList>
    </citation>
    <scope>NUCLEOTIDE SEQUENCE [LARGE SCALE MRNA]</scope>
    <source>
        <tissue evidence="9">Lung</tissue>
    </source>
</reference>
<reference key="3">
    <citation type="journal article" date="2012" name="Biol. Pharm. Bull.">
        <title>In vitro study on the transport of zinc across intestinal epithelial cells using Caco-2 monolayers and isolated rat intestinal membranes.</title>
        <authorList>
            <person name="Yasuno T."/>
            <person name="Okamoto H."/>
            <person name="Nagai M."/>
            <person name="Kimura S."/>
            <person name="Yamamoto T."/>
            <person name="Nagano K."/>
            <person name="Furubayashi T."/>
            <person name="Yoshikawa Y."/>
            <person name="Yasui H."/>
            <person name="Katsumi H."/>
            <person name="Sakane T."/>
            <person name="Yamamoto A."/>
        </authorList>
    </citation>
    <scope>TISSUE SPECIFICITY</scope>
</reference>
<keyword id="KW-1003">Cell membrane</keyword>
<keyword id="KW-0967">Endosome</keyword>
<keyword id="KW-0325">Glycoprotein</keyword>
<keyword id="KW-0406">Ion transport</keyword>
<keyword id="KW-0472">Membrane</keyword>
<keyword id="KW-0479">Metal-binding</keyword>
<keyword id="KW-1185">Reference proteome</keyword>
<keyword id="KW-0732">Signal</keyword>
<keyword id="KW-0812">Transmembrane</keyword>
<keyword id="KW-1133">Transmembrane helix</keyword>
<keyword id="KW-0813">Transport</keyword>
<keyword id="KW-0832">Ubl conjugation</keyword>
<keyword id="KW-0862">Zinc</keyword>
<keyword id="KW-0864">Zinc transport</keyword>
<comment type="function">
    <text evidence="2 3">Selective transporter that mediates the uptake of Zn(2+). Plays an essential role for dietary zinc uptake from small intestine (By similarity). The Zn(2+) uniporter activity is regulated by zinc availability. Also exhibits polyspecific binding and transport of Cu(2+), Cd(2+) and possibly Ni(2+) but at higher concentrations (By similarity).</text>
</comment>
<comment type="catalytic activity">
    <reaction evidence="2">
        <text>Zn(2+)(in) = Zn(2+)(out)</text>
        <dbReference type="Rhea" id="RHEA:29351"/>
        <dbReference type="ChEBI" id="CHEBI:29105"/>
    </reaction>
</comment>
<comment type="subunit">
    <text evidence="2">Homodimer; homodimerization is mediated by the transmembrane domain.</text>
</comment>
<comment type="subcellular location">
    <subcellularLocation>
        <location evidence="3">Cell membrane</location>
        <topology evidence="1">Multi-pass membrane protein</topology>
    </subcellularLocation>
    <subcellularLocation>
        <location evidence="3">Recycling endosome membrane</location>
        <topology evidence="1">Multi-pass membrane protein</topology>
    </subcellularLocation>
    <subcellularLocation>
        <location evidence="3">Apical cell membrane</location>
        <topology evidence="1">Multi-pass membrane protein</topology>
    </subcellularLocation>
    <text evidence="3">Colocalized with TFRC in the recycling endosomes. Cycles between endosomal compartments and the plasma membrane in response to zinc availability. Translocates to the apical membrane during zinc deficiency. Expressed on the apical surface of the intestinal wall.</text>
</comment>
<comment type="tissue specificity">
    <text evidence="6">Expressed in duodenum, jejunum, and ileum.</text>
</comment>
<comment type="domain">
    <text evidence="2">The two metal binding sites M1 and M2 that are halfway through the membrane form a binuclear metal center. M1 is essential to Zn(2+) transport, while the other, M2 appears to have an auxiliary role presumably by acting as an additional transport site that can modulate the properties of the primary transport site. The binuclear metal center plays a key role in zinc sensing.</text>
</comment>
<comment type="PTM">
    <text evidence="3">The extracellular N-terminal ectodomain is cleaved when cells are Zn(2+) deficient, N-terminally cleaved SLC39A4 is internalized at a faster rate.</text>
</comment>
<comment type="PTM">
    <text evidence="2">Under excess Zn(2+) conditions, SLC39A4 on the cell surface is rapidly endocytosed, ubiquitinated and degraded.</text>
</comment>
<comment type="PTM">
    <text evidence="2">Glycosylated.</text>
</comment>
<comment type="similarity">
    <text evidence="4">Belongs to the ZIP transporter (TC 2.A.5) family.</text>
</comment>
<comment type="sequence caution" evidence="8">
    <conflict type="erroneous initiation">
        <sequence resource="EMBL-CDS" id="AAI27515"/>
    </conflict>
    <text>Truncated N-terminus.</text>
</comment>
<name>S39A4_RAT</name>
<organism>
    <name type="scientific">Rattus norvegicus</name>
    <name type="common">Rat</name>
    <dbReference type="NCBI Taxonomy" id="10116"/>
    <lineage>
        <taxon>Eukaryota</taxon>
        <taxon>Metazoa</taxon>
        <taxon>Chordata</taxon>
        <taxon>Craniata</taxon>
        <taxon>Vertebrata</taxon>
        <taxon>Euteleostomi</taxon>
        <taxon>Mammalia</taxon>
        <taxon>Eutheria</taxon>
        <taxon>Euarchontoglires</taxon>
        <taxon>Glires</taxon>
        <taxon>Rodentia</taxon>
        <taxon>Myomorpha</taxon>
        <taxon>Muroidea</taxon>
        <taxon>Muridae</taxon>
        <taxon>Murinae</taxon>
        <taxon>Rattus</taxon>
    </lineage>
</organism>
<evidence type="ECO:0000250" key="1">
    <source>
        <dbReference type="UniProtKB" id="A0A0H3LM39"/>
    </source>
</evidence>
<evidence type="ECO:0000250" key="2">
    <source>
        <dbReference type="UniProtKB" id="Q6P5W5"/>
    </source>
</evidence>
<evidence type="ECO:0000250" key="3">
    <source>
        <dbReference type="UniProtKB" id="Q78IQ7"/>
    </source>
</evidence>
<evidence type="ECO:0000255" key="4"/>
<evidence type="ECO:0000256" key="5">
    <source>
        <dbReference type="SAM" id="MobiDB-lite"/>
    </source>
</evidence>
<evidence type="ECO:0000269" key="6">
    <source>
    </source>
</evidence>
<evidence type="ECO:0000303" key="7">
    <source>
    </source>
</evidence>
<evidence type="ECO:0000305" key="8"/>
<evidence type="ECO:0000312" key="9">
    <source>
        <dbReference type="EMBL" id="AAI27515.1"/>
    </source>
</evidence>